<comment type="function">
    <text evidence="3 4 5 8">Required for resistance to linearmycins, a family of antibiotic-specialized metabolites produced by some streptomycetes (PubMed:26647299, PubMed:28461449). Member of the two-component regulatory system LnrJ/LnrK, which induces expression of the LnrLMN ABC transporter in response to linearmycins and other polyenes (PubMed:11717295, PubMed:26647299, PubMed:28461449). Probably binds to the promoter region of the lnrLMN operon and directly regulates its expression (Probable). May also promote biofilm formation (PubMed:28461449).</text>
</comment>
<comment type="subcellular location">
    <subcellularLocation>
        <location evidence="7">Cytoplasm</location>
    </subcellularLocation>
</comment>
<comment type="PTM">
    <text evidence="8">Phosphorylated by LnrJ.</text>
</comment>
<comment type="disruption phenotype">
    <text evidence="4">Deletion mutant does not show any observable phenotype.</text>
</comment>
<evidence type="ECO:0000255" key="1">
    <source>
        <dbReference type="PROSITE-ProRule" id="PRU00169"/>
    </source>
</evidence>
<evidence type="ECO:0000255" key="2">
    <source>
        <dbReference type="PROSITE-ProRule" id="PRU00411"/>
    </source>
</evidence>
<evidence type="ECO:0000269" key="3">
    <source>
    </source>
</evidence>
<evidence type="ECO:0000269" key="4">
    <source>
    </source>
</evidence>
<evidence type="ECO:0000269" key="5">
    <source>
    </source>
</evidence>
<evidence type="ECO:0000303" key="6">
    <source>
    </source>
</evidence>
<evidence type="ECO:0000305" key="7"/>
<evidence type="ECO:0000305" key="8">
    <source>
    </source>
</evidence>
<evidence type="ECO:0000312" key="9">
    <source>
        <dbReference type="EMBL" id="CAB12659.1"/>
    </source>
</evidence>
<dbReference type="EMBL" id="D78508">
    <property type="protein sequence ID" value="BAA11401.1"/>
    <property type="molecule type" value="Genomic_DNA"/>
</dbReference>
<dbReference type="EMBL" id="AL009126">
    <property type="protein sequence ID" value="CAB12659.1"/>
    <property type="molecule type" value="Genomic_DNA"/>
</dbReference>
<dbReference type="PIR" id="JC5359">
    <property type="entry name" value="JC5359"/>
</dbReference>
<dbReference type="RefSeq" id="NP_388711.1">
    <property type="nucleotide sequence ID" value="NC_000964.3"/>
</dbReference>
<dbReference type="RefSeq" id="WP_003242530.1">
    <property type="nucleotide sequence ID" value="NZ_OZ025638.1"/>
</dbReference>
<dbReference type="SMR" id="P94439"/>
<dbReference type="FunCoup" id="P94439">
    <property type="interactions" value="199"/>
</dbReference>
<dbReference type="STRING" id="224308.BSU08300"/>
<dbReference type="PaxDb" id="224308-BSU08300"/>
<dbReference type="EnsemblBacteria" id="CAB12659">
    <property type="protein sequence ID" value="CAB12659"/>
    <property type="gene ID" value="BSU_08300"/>
</dbReference>
<dbReference type="GeneID" id="939209"/>
<dbReference type="KEGG" id="bsu:BSU08300"/>
<dbReference type="PATRIC" id="fig|224308.179.peg.896"/>
<dbReference type="eggNOG" id="COG2197">
    <property type="taxonomic scope" value="Bacteria"/>
</dbReference>
<dbReference type="InParanoid" id="P94439"/>
<dbReference type="OrthoDB" id="9780153at2"/>
<dbReference type="PhylomeDB" id="P94439"/>
<dbReference type="BioCyc" id="BSUB:BSU08300-MONOMER"/>
<dbReference type="Proteomes" id="UP000001570">
    <property type="component" value="Chromosome"/>
</dbReference>
<dbReference type="GO" id="GO:0005737">
    <property type="term" value="C:cytoplasm"/>
    <property type="evidence" value="ECO:0007669"/>
    <property type="project" value="UniProtKB-SubCell"/>
</dbReference>
<dbReference type="GO" id="GO:0003677">
    <property type="term" value="F:DNA binding"/>
    <property type="evidence" value="ECO:0007669"/>
    <property type="project" value="UniProtKB-KW"/>
</dbReference>
<dbReference type="GO" id="GO:0000160">
    <property type="term" value="P:phosphorelay signal transduction system"/>
    <property type="evidence" value="ECO:0007669"/>
    <property type="project" value="UniProtKB-KW"/>
</dbReference>
<dbReference type="GO" id="GO:0006355">
    <property type="term" value="P:regulation of DNA-templated transcription"/>
    <property type="evidence" value="ECO:0007669"/>
    <property type="project" value="InterPro"/>
</dbReference>
<dbReference type="CDD" id="cd06170">
    <property type="entry name" value="LuxR_C_like"/>
    <property type="match status" value="1"/>
</dbReference>
<dbReference type="CDD" id="cd17535">
    <property type="entry name" value="REC_NarL-like"/>
    <property type="match status" value="1"/>
</dbReference>
<dbReference type="Gene3D" id="3.40.50.2300">
    <property type="match status" value="1"/>
</dbReference>
<dbReference type="InterPro" id="IPR011006">
    <property type="entry name" value="CheY-like_superfamily"/>
</dbReference>
<dbReference type="InterPro" id="IPR016032">
    <property type="entry name" value="Sig_transdc_resp-reg_C-effctor"/>
</dbReference>
<dbReference type="InterPro" id="IPR001789">
    <property type="entry name" value="Sig_transdc_resp-reg_receiver"/>
</dbReference>
<dbReference type="InterPro" id="IPR000792">
    <property type="entry name" value="Tscrpt_reg_LuxR_C"/>
</dbReference>
<dbReference type="InterPro" id="IPR039420">
    <property type="entry name" value="WalR-like"/>
</dbReference>
<dbReference type="PANTHER" id="PTHR43214:SF40">
    <property type="entry name" value="TRANSCRIPTIONAL REGULATORY PROTEIN LNRK"/>
    <property type="match status" value="1"/>
</dbReference>
<dbReference type="PANTHER" id="PTHR43214">
    <property type="entry name" value="TWO-COMPONENT RESPONSE REGULATOR"/>
    <property type="match status" value="1"/>
</dbReference>
<dbReference type="Pfam" id="PF00196">
    <property type="entry name" value="GerE"/>
    <property type="match status" value="1"/>
</dbReference>
<dbReference type="Pfam" id="PF00072">
    <property type="entry name" value="Response_reg"/>
    <property type="match status" value="1"/>
</dbReference>
<dbReference type="PRINTS" id="PR00038">
    <property type="entry name" value="HTHLUXR"/>
</dbReference>
<dbReference type="SMART" id="SM00421">
    <property type="entry name" value="HTH_LUXR"/>
    <property type="match status" value="1"/>
</dbReference>
<dbReference type="SMART" id="SM00448">
    <property type="entry name" value="REC"/>
    <property type="match status" value="1"/>
</dbReference>
<dbReference type="SUPFAM" id="SSF46894">
    <property type="entry name" value="C-terminal effector domain of the bipartite response regulators"/>
    <property type="match status" value="1"/>
</dbReference>
<dbReference type="SUPFAM" id="SSF52172">
    <property type="entry name" value="CheY-like"/>
    <property type="match status" value="1"/>
</dbReference>
<dbReference type="PROSITE" id="PS00622">
    <property type="entry name" value="HTH_LUXR_1"/>
    <property type="match status" value="1"/>
</dbReference>
<dbReference type="PROSITE" id="PS50043">
    <property type="entry name" value="HTH_LUXR_2"/>
    <property type="match status" value="1"/>
</dbReference>
<dbReference type="PROSITE" id="PS50110">
    <property type="entry name" value="RESPONSE_REGULATORY"/>
    <property type="match status" value="1"/>
</dbReference>
<sequence length="220" mass="24371">MIKIIITDDQDIVREGLASLLQLREELDVIATARNGQEAFEKAKELEPDIVLMDIRMPVSNGVEGTKLITSSLPSVKVLMLTTFKDSALIAEALEEGASGYLLKDMSADTIVKAVMTVHSGGMVLPPELTAQMLNEWKREKQLKGINEIEKPNELLDLTEREIEVLAELGYGLNNKEIAEKLYITEGTVKNHVSNIISKLAVRDRTQAAIYSVRYGVSVF</sequence>
<protein>
    <recommendedName>
        <fullName evidence="7">Transcriptional regulatory protein LnrK</fullName>
    </recommendedName>
</protein>
<reference key="1">
    <citation type="journal article" date="1996" name="Gene">
        <title>The Bacillus subtilis chromosome region near 78 degrees contains the genes encoding a new two-component system, three ABC transporters and a lipase.</title>
        <authorList>
            <person name="Yamamoto H."/>
            <person name="Uchiyama S."/>
            <person name="Sekiguchi J."/>
        </authorList>
    </citation>
    <scope>NUCLEOTIDE SEQUENCE [GENOMIC DNA]</scope>
    <source>
        <strain>168 / AC327</strain>
    </source>
</reference>
<reference key="2">
    <citation type="journal article" date="1997" name="Nature">
        <title>The complete genome sequence of the Gram-positive bacterium Bacillus subtilis.</title>
        <authorList>
            <person name="Kunst F."/>
            <person name="Ogasawara N."/>
            <person name="Moszer I."/>
            <person name="Albertini A.M."/>
            <person name="Alloni G."/>
            <person name="Azevedo V."/>
            <person name="Bertero M.G."/>
            <person name="Bessieres P."/>
            <person name="Bolotin A."/>
            <person name="Borchert S."/>
            <person name="Borriss R."/>
            <person name="Boursier L."/>
            <person name="Brans A."/>
            <person name="Braun M."/>
            <person name="Brignell S.C."/>
            <person name="Bron S."/>
            <person name="Brouillet S."/>
            <person name="Bruschi C.V."/>
            <person name="Caldwell B."/>
            <person name="Capuano V."/>
            <person name="Carter N.M."/>
            <person name="Choi S.-K."/>
            <person name="Codani J.-J."/>
            <person name="Connerton I.F."/>
            <person name="Cummings N.J."/>
            <person name="Daniel R.A."/>
            <person name="Denizot F."/>
            <person name="Devine K.M."/>
            <person name="Duesterhoeft A."/>
            <person name="Ehrlich S.D."/>
            <person name="Emmerson P.T."/>
            <person name="Entian K.-D."/>
            <person name="Errington J."/>
            <person name="Fabret C."/>
            <person name="Ferrari E."/>
            <person name="Foulger D."/>
            <person name="Fritz C."/>
            <person name="Fujita M."/>
            <person name="Fujita Y."/>
            <person name="Fuma S."/>
            <person name="Galizzi A."/>
            <person name="Galleron N."/>
            <person name="Ghim S.-Y."/>
            <person name="Glaser P."/>
            <person name="Goffeau A."/>
            <person name="Golightly E.J."/>
            <person name="Grandi G."/>
            <person name="Guiseppi G."/>
            <person name="Guy B.J."/>
            <person name="Haga K."/>
            <person name="Haiech J."/>
            <person name="Harwood C.R."/>
            <person name="Henaut A."/>
            <person name="Hilbert H."/>
            <person name="Holsappel S."/>
            <person name="Hosono S."/>
            <person name="Hullo M.-F."/>
            <person name="Itaya M."/>
            <person name="Jones L.-M."/>
            <person name="Joris B."/>
            <person name="Karamata D."/>
            <person name="Kasahara Y."/>
            <person name="Klaerr-Blanchard M."/>
            <person name="Klein C."/>
            <person name="Kobayashi Y."/>
            <person name="Koetter P."/>
            <person name="Koningstein G."/>
            <person name="Krogh S."/>
            <person name="Kumano M."/>
            <person name="Kurita K."/>
            <person name="Lapidus A."/>
            <person name="Lardinois S."/>
            <person name="Lauber J."/>
            <person name="Lazarevic V."/>
            <person name="Lee S.-M."/>
            <person name="Levine A."/>
            <person name="Liu H."/>
            <person name="Masuda S."/>
            <person name="Mauel C."/>
            <person name="Medigue C."/>
            <person name="Medina N."/>
            <person name="Mellado R.P."/>
            <person name="Mizuno M."/>
            <person name="Moestl D."/>
            <person name="Nakai S."/>
            <person name="Noback M."/>
            <person name="Noone D."/>
            <person name="O'Reilly M."/>
            <person name="Ogawa K."/>
            <person name="Ogiwara A."/>
            <person name="Oudega B."/>
            <person name="Park S.-H."/>
            <person name="Parro V."/>
            <person name="Pohl T.M."/>
            <person name="Portetelle D."/>
            <person name="Porwollik S."/>
            <person name="Prescott A.M."/>
            <person name="Presecan E."/>
            <person name="Pujic P."/>
            <person name="Purnelle B."/>
            <person name="Rapoport G."/>
            <person name="Rey M."/>
            <person name="Reynolds S."/>
            <person name="Rieger M."/>
            <person name="Rivolta C."/>
            <person name="Rocha E."/>
            <person name="Roche B."/>
            <person name="Rose M."/>
            <person name="Sadaie Y."/>
            <person name="Sato T."/>
            <person name="Scanlan E."/>
            <person name="Schleich S."/>
            <person name="Schroeter R."/>
            <person name="Scoffone F."/>
            <person name="Sekiguchi J."/>
            <person name="Sekowska A."/>
            <person name="Seror S.J."/>
            <person name="Serror P."/>
            <person name="Shin B.-S."/>
            <person name="Soldo B."/>
            <person name="Sorokin A."/>
            <person name="Tacconi E."/>
            <person name="Takagi T."/>
            <person name="Takahashi H."/>
            <person name="Takemaru K."/>
            <person name="Takeuchi M."/>
            <person name="Tamakoshi A."/>
            <person name="Tanaka T."/>
            <person name="Terpstra P."/>
            <person name="Tognoni A."/>
            <person name="Tosato V."/>
            <person name="Uchiyama S."/>
            <person name="Vandenbol M."/>
            <person name="Vannier F."/>
            <person name="Vassarotti A."/>
            <person name="Viari A."/>
            <person name="Wambutt R."/>
            <person name="Wedler E."/>
            <person name="Wedler H."/>
            <person name="Weitzenegger T."/>
            <person name="Winters P."/>
            <person name="Wipat A."/>
            <person name="Yamamoto H."/>
            <person name="Yamane K."/>
            <person name="Yasumoto K."/>
            <person name="Yata K."/>
            <person name="Yoshida K."/>
            <person name="Yoshikawa H.-F."/>
            <person name="Zumstein E."/>
            <person name="Yoshikawa H."/>
            <person name="Danchin A."/>
        </authorList>
    </citation>
    <scope>NUCLEOTIDE SEQUENCE [LARGE SCALE GENOMIC DNA]</scope>
    <source>
        <strain>168</strain>
    </source>
</reference>
<reference key="3">
    <citation type="journal article" date="2001" name="J. Bacteriol.">
        <title>Comprehensive DNA microarray analysis of Bacillus subtilis two-component regulatory systems.</title>
        <authorList>
            <person name="Kobayashi K."/>
            <person name="Ogura M."/>
            <person name="Yamaguchi H."/>
            <person name="Yoshida K."/>
            <person name="Ogasawara N."/>
            <person name="Tanaka T."/>
            <person name="Fujita Y."/>
        </authorList>
    </citation>
    <scope>FUNCTION</scope>
</reference>
<reference key="4">
    <citation type="journal article" date="2015" name="PLoS Genet.">
        <title>Escape from lethal bacterial competition through coupled activation of antibiotic resistance and a mobilized subpopulation.</title>
        <authorList>
            <person name="Stubbendieck R.M."/>
            <person name="Straight P.D."/>
        </authorList>
    </citation>
    <scope>FUNCTION</scope>
    <scope>DISRUPTION PHENOTYPE</scope>
    <scope>MUTAGENESIS OF ASP-54</scope>
</reference>
<reference key="5">
    <citation type="journal article" date="2017" name="J. Bacteriol.">
        <title>Linearmycins activate a two-component signaling system involved in bacterial competition and biofilm morphology.</title>
        <authorList>
            <person name="Stubbendieck R.M."/>
            <person name="Straight P.D."/>
        </authorList>
    </citation>
    <scope>FUNCTION</scope>
</reference>
<keyword id="KW-0010">Activator</keyword>
<keyword id="KW-0963">Cytoplasm</keyword>
<keyword id="KW-0238">DNA-binding</keyword>
<keyword id="KW-0597">Phosphoprotein</keyword>
<keyword id="KW-1185">Reference proteome</keyword>
<keyword id="KW-0804">Transcription</keyword>
<keyword id="KW-0805">Transcription regulation</keyword>
<keyword id="KW-0902">Two-component regulatory system</keyword>
<name>LNRK_BACSU</name>
<organism>
    <name type="scientific">Bacillus subtilis (strain 168)</name>
    <dbReference type="NCBI Taxonomy" id="224308"/>
    <lineage>
        <taxon>Bacteria</taxon>
        <taxon>Bacillati</taxon>
        <taxon>Bacillota</taxon>
        <taxon>Bacilli</taxon>
        <taxon>Bacillales</taxon>
        <taxon>Bacillaceae</taxon>
        <taxon>Bacillus</taxon>
    </lineage>
</organism>
<gene>
    <name evidence="6" type="primary">lnrK</name>
    <name evidence="9" type="synonym">linK</name>
    <name type="synonym">yfiK</name>
    <name type="ordered locus">BSU08300</name>
</gene>
<accession>P94439</accession>
<accession>Q796Z8</accession>
<feature type="chain" id="PRO_0000360775" description="Transcriptional regulatory protein LnrK">
    <location>
        <begin position="1"/>
        <end position="220"/>
    </location>
</feature>
<feature type="domain" description="Response regulatory" evidence="1">
    <location>
        <begin position="3"/>
        <end position="119"/>
    </location>
</feature>
<feature type="domain" description="HTH luxR-type" evidence="2">
    <location>
        <begin position="151"/>
        <end position="216"/>
    </location>
</feature>
<feature type="DNA-binding region" description="H-T-H motif" evidence="2">
    <location>
        <begin position="175"/>
        <end position="194"/>
    </location>
</feature>
<feature type="modified residue" description="4-aspartylphosphate" evidence="1">
    <location>
        <position position="54"/>
    </location>
</feature>
<feature type="mutagenesis site" description="Mutant is sensitive to linearmycins." evidence="4">
    <original>D</original>
    <variation>A</variation>
    <location>
        <position position="54"/>
    </location>
</feature>
<proteinExistence type="evidence at protein level"/>